<accession>A1A836</accession>
<sequence>MPSTPEEKKKVLTRVRRIRGQIDALERSLEGDAECRAILQQIAAVRGAANGLMAEVLESHIRETFDRNDCYSREVSQSVDDTIELVRAYLK</sequence>
<evidence type="ECO:0000250" key="1">
    <source>
        <dbReference type="UniProtKB" id="P0AAP3"/>
    </source>
</evidence>
<evidence type="ECO:0000305" key="2"/>
<proteinExistence type="inferred from homology"/>
<name>FRMR_ECOK1</name>
<protein>
    <recommendedName>
        <fullName evidence="1">Transcriptional repressor FrmR</fullName>
    </recommendedName>
</protein>
<keyword id="KW-0963">Cytoplasm</keyword>
<keyword id="KW-0238">DNA-binding</keyword>
<keyword id="KW-1185">Reference proteome</keyword>
<keyword id="KW-0678">Repressor</keyword>
<keyword id="KW-0804">Transcription</keyword>
<keyword id="KW-0805">Transcription regulation</keyword>
<dbReference type="EMBL" id="CP000468">
    <property type="protein sequence ID" value="ABI99825.1"/>
    <property type="status" value="ALT_INIT"/>
    <property type="molecule type" value="Genomic_DNA"/>
</dbReference>
<dbReference type="RefSeq" id="WP_001141271.1">
    <property type="nucleotide sequence ID" value="NZ_CADILS010000037.1"/>
</dbReference>
<dbReference type="SMR" id="A1A836"/>
<dbReference type="GeneID" id="93777098"/>
<dbReference type="KEGG" id="ecv:APECO1_1644"/>
<dbReference type="HOGENOM" id="CLU_130332_3_0_6"/>
<dbReference type="Proteomes" id="UP000008216">
    <property type="component" value="Chromosome"/>
</dbReference>
<dbReference type="GO" id="GO:0005737">
    <property type="term" value="C:cytoplasm"/>
    <property type="evidence" value="ECO:0007669"/>
    <property type="project" value="UniProtKB-SubCell"/>
</dbReference>
<dbReference type="GO" id="GO:0003677">
    <property type="term" value="F:DNA binding"/>
    <property type="evidence" value="ECO:0007669"/>
    <property type="project" value="UniProtKB-KW"/>
</dbReference>
<dbReference type="GO" id="GO:0046872">
    <property type="term" value="F:metal ion binding"/>
    <property type="evidence" value="ECO:0007669"/>
    <property type="project" value="InterPro"/>
</dbReference>
<dbReference type="GO" id="GO:0045892">
    <property type="term" value="P:negative regulation of DNA-templated transcription"/>
    <property type="evidence" value="ECO:0007669"/>
    <property type="project" value="UniProtKB-ARBA"/>
</dbReference>
<dbReference type="CDD" id="cd10153">
    <property type="entry name" value="RcnR-FrmR-like_DUF156"/>
    <property type="match status" value="1"/>
</dbReference>
<dbReference type="FunFam" id="1.20.58.1000:FF:000002">
    <property type="entry name" value="Transcriptional repressor FrmR"/>
    <property type="match status" value="1"/>
</dbReference>
<dbReference type="Gene3D" id="1.20.58.1000">
    <property type="entry name" value="Metal-sensitive repressor, helix protomer"/>
    <property type="match status" value="1"/>
</dbReference>
<dbReference type="InterPro" id="IPR003735">
    <property type="entry name" value="Metal_Tscrpt_repr"/>
</dbReference>
<dbReference type="InterPro" id="IPR038390">
    <property type="entry name" value="Metal_Tscrpt_repr_sf"/>
</dbReference>
<dbReference type="NCBIfam" id="NF008464">
    <property type="entry name" value="PRK11352.1"/>
    <property type="match status" value="1"/>
</dbReference>
<dbReference type="PANTHER" id="PTHR33677:SF5">
    <property type="entry name" value="TRANSCRIPTIONAL REPRESSOR FRMR"/>
    <property type="match status" value="1"/>
</dbReference>
<dbReference type="PANTHER" id="PTHR33677">
    <property type="entry name" value="TRANSCRIPTIONAL REPRESSOR FRMR-RELATED"/>
    <property type="match status" value="1"/>
</dbReference>
<dbReference type="Pfam" id="PF02583">
    <property type="entry name" value="Trns_repr_metal"/>
    <property type="match status" value="1"/>
</dbReference>
<gene>
    <name evidence="1" type="primary">frmR</name>
    <name type="ordered locus">Ecok1_03320</name>
    <name type="ORF">APECO1_1644</name>
</gene>
<organism>
    <name type="scientific">Escherichia coli O1:K1 / APEC</name>
    <dbReference type="NCBI Taxonomy" id="405955"/>
    <lineage>
        <taxon>Bacteria</taxon>
        <taxon>Pseudomonadati</taxon>
        <taxon>Pseudomonadota</taxon>
        <taxon>Gammaproteobacteria</taxon>
        <taxon>Enterobacterales</taxon>
        <taxon>Enterobacteriaceae</taxon>
        <taxon>Escherichia</taxon>
    </lineage>
</organism>
<comment type="function">
    <text evidence="1">Formaldehyde sensor. In the absence of formaldehyde, mediates repression of the frmRAB operon. Acts by binding directly to the frmRAB promoter region. In the presence of formaldehyde, it dissociates from the frmRAB promoter region and allows expression of the formaldehyde detoxification system encoded by frmA and frmB.</text>
</comment>
<comment type="subunit">
    <text evidence="1">Homotetramer.</text>
</comment>
<comment type="subcellular location">
    <subcellularLocation>
        <location evidence="1">Cytoplasm</location>
    </subcellularLocation>
</comment>
<comment type="similarity">
    <text evidence="2">Belongs to the FrmR/RcnR family.</text>
</comment>
<comment type="sequence caution" evidence="2">
    <conflict type="erroneous initiation">
        <sequence resource="EMBL-CDS" id="ABI99825"/>
    </conflict>
    <text>Extended N-terminus.</text>
</comment>
<feature type="chain" id="PRO_0000340125" description="Transcriptional repressor FrmR">
    <location>
        <begin position="1"/>
        <end position="91"/>
    </location>
</feature>
<feature type="site" description="Important for response to formaldehyde" evidence="1">
    <location>
        <position position="2"/>
    </location>
</feature>
<feature type="site" description="Important for response to formaldehyde" evidence="1">
    <location>
        <position position="35"/>
    </location>
</feature>
<reference key="1">
    <citation type="journal article" date="2007" name="J. Bacteriol.">
        <title>The genome sequence of avian pathogenic Escherichia coli strain O1:K1:H7 shares strong similarities with human extraintestinal pathogenic E. coli genomes.</title>
        <authorList>
            <person name="Johnson T.J."/>
            <person name="Kariyawasam S."/>
            <person name="Wannemuehler Y."/>
            <person name="Mangiamele P."/>
            <person name="Johnson S.J."/>
            <person name="Doetkott C."/>
            <person name="Skyberg J.A."/>
            <person name="Lynne A.M."/>
            <person name="Johnson J.R."/>
            <person name="Nolan L.K."/>
        </authorList>
    </citation>
    <scope>NUCLEOTIDE SEQUENCE [LARGE SCALE GENOMIC DNA]</scope>
</reference>